<evidence type="ECO:0000255" key="1">
    <source>
        <dbReference type="HAMAP-Rule" id="MF_01416"/>
    </source>
</evidence>
<proteinExistence type="inferred from homology"/>
<protein>
    <recommendedName>
        <fullName evidence="1">ATP synthase subunit delta</fullName>
    </recommendedName>
    <alternativeName>
        <fullName evidence="1">ATP synthase F(1) sector subunit delta</fullName>
    </alternativeName>
    <alternativeName>
        <fullName evidence="1">F-type ATPase subunit delta</fullName>
        <shortName evidence="1">F-ATPase subunit delta</shortName>
    </alternativeName>
</protein>
<organism>
    <name type="scientific">Lacticaseibacillus paracasei (strain ATCC 334 / BCRC 17002 / CCUG 31169 / CIP 107868 / KCTC 3260 / NRRL B-441)</name>
    <name type="common">Lactobacillus paracasei</name>
    <dbReference type="NCBI Taxonomy" id="321967"/>
    <lineage>
        <taxon>Bacteria</taxon>
        <taxon>Bacillati</taxon>
        <taxon>Bacillota</taxon>
        <taxon>Bacilli</taxon>
        <taxon>Lactobacillales</taxon>
        <taxon>Lactobacillaceae</taxon>
        <taxon>Lacticaseibacillus</taxon>
    </lineage>
</organism>
<keyword id="KW-0066">ATP synthesis</keyword>
<keyword id="KW-1003">Cell membrane</keyword>
<keyword id="KW-0139">CF(1)</keyword>
<keyword id="KW-0375">Hydrogen ion transport</keyword>
<keyword id="KW-0406">Ion transport</keyword>
<keyword id="KW-0472">Membrane</keyword>
<keyword id="KW-1185">Reference proteome</keyword>
<keyword id="KW-0813">Transport</keyword>
<accession>Q03A21</accession>
<feature type="chain" id="PRO_1000184732" description="ATP synthase subunit delta">
    <location>
        <begin position="1"/>
        <end position="181"/>
    </location>
</feature>
<reference key="1">
    <citation type="journal article" date="2006" name="Proc. Natl. Acad. Sci. U.S.A.">
        <title>Comparative genomics of the lactic acid bacteria.</title>
        <authorList>
            <person name="Makarova K.S."/>
            <person name="Slesarev A."/>
            <person name="Wolf Y.I."/>
            <person name="Sorokin A."/>
            <person name="Mirkin B."/>
            <person name="Koonin E.V."/>
            <person name="Pavlov A."/>
            <person name="Pavlova N."/>
            <person name="Karamychev V."/>
            <person name="Polouchine N."/>
            <person name="Shakhova V."/>
            <person name="Grigoriev I."/>
            <person name="Lou Y."/>
            <person name="Rohksar D."/>
            <person name="Lucas S."/>
            <person name="Huang K."/>
            <person name="Goodstein D.M."/>
            <person name="Hawkins T."/>
            <person name="Plengvidhya V."/>
            <person name="Welker D."/>
            <person name="Hughes J."/>
            <person name="Goh Y."/>
            <person name="Benson A."/>
            <person name="Baldwin K."/>
            <person name="Lee J.-H."/>
            <person name="Diaz-Muniz I."/>
            <person name="Dosti B."/>
            <person name="Smeianov V."/>
            <person name="Wechter W."/>
            <person name="Barabote R."/>
            <person name="Lorca G."/>
            <person name="Altermann E."/>
            <person name="Barrangou R."/>
            <person name="Ganesan B."/>
            <person name="Xie Y."/>
            <person name="Rawsthorne H."/>
            <person name="Tamir D."/>
            <person name="Parker C."/>
            <person name="Breidt F."/>
            <person name="Broadbent J.R."/>
            <person name="Hutkins R."/>
            <person name="O'Sullivan D."/>
            <person name="Steele J."/>
            <person name="Unlu G."/>
            <person name="Saier M.H. Jr."/>
            <person name="Klaenhammer T."/>
            <person name="Richardson P."/>
            <person name="Kozyavkin S."/>
            <person name="Weimer B.C."/>
            <person name="Mills D.A."/>
        </authorList>
    </citation>
    <scope>NUCLEOTIDE SEQUENCE [LARGE SCALE GENOMIC DNA]</scope>
    <source>
        <strain>ATCC 334 / BCRC 17002 / CCUG 31169 / CIP 107868 / KCTC 3260 / NRRL B-441</strain>
    </source>
</reference>
<name>ATPD_LACP3</name>
<dbReference type="EMBL" id="CP000423">
    <property type="protein sequence ID" value="ABJ69951.1"/>
    <property type="molecule type" value="Genomic_DNA"/>
</dbReference>
<dbReference type="RefSeq" id="WP_003574676.1">
    <property type="nucleotide sequence ID" value="NC_008526.1"/>
</dbReference>
<dbReference type="RefSeq" id="YP_806393.1">
    <property type="nucleotide sequence ID" value="NC_008526.1"/>
</dbReference>
<dbReference type="SMR" id="Q03A21"/>
<dbReference type="STRING" id="321967.LSEI_1163"/>
<dbReference type="PaxDb" id="321967-LSEI_1163"/>
<dbReference type="KEGG" id="lca:LSEI_1163"/>
<dbReference type="PATRIC" id="fig|321967.11.peg.1136"/>
<dbReference type="HOGENOM" id="CLU_085114_4_1_9"/>
<dbReference type="Proteomes" id="UP000001651">
    <property type="component" value="Chromosome"/>
</dbReference>
<dbReference type="GO" id="GO:0005886">
    <property type="term" value="C:plasma membrane"/>
    <property type="evidence" value="ECO:0007669"/>
    <property type="project" value="UniProtKB-SubCell"/>
</dbReference>
<dbReference type="GO" id="GO:0045259">
    <property type="term" value="C:proton-transporting ATP synthase complex"/>
    <property type="evidence" value="ECO:0007669"/>
    <property type="project" value="UniProtKB-KW"/>
</dbReference>
<dbReference type="GO" id="GO:0046933">
    <property type="term" value="F:proton-transporting ATP synthase activity, rotational mechanism"/>
    <property type="evidence" value="ECO:0007669"/>
    <property type="project" value="UniProtKB-UniRule"/>
</dbReference>
<dbReference type="Gene3D" id="1.10.520.20">
    <property type="entry name" value="N-terminal domain of the delta subunit of the F1F0-ATP synthase"/>
    <property type="match status" value="1"/>
</dbReference>
<dbReference type="HAMAP" id="MF_01416">
    <property type="entry name" value="ATP_synth_delta_bact"/>
    <property type="match status" value="1"/>
</dbReference>
<dbReference type="InterPro" id="IPR026015">
    <property type="entry name" value="ATP_synth_OSCP/delta_N_sf"/>
</dbReference>
<dbReference type="InterPro" id="IPR000711">
    <property type="entry name" value="ATPase_OSCP/dsu"/>
</dbReference>
<dbReference type="NCBIfam" id="TIGR01145">
    <property type="entry name" value="ATP_synt_delta"/>
    <property type="match status" value="1"/>
</dbReference>
<dbReference type="PANTHER" id="PTHR11910">
    <property type="entry name" value="ATP SYNTHASE DELTA CHAIN"/>
    <property type="match status" value="1"/>
</dbReference>
<dbReference type="Pfam" id="PF00213">
    <property type="entry name" value="OSCP"/>
    <property type="match status" value="1"/>
</dbReference>
<dbReference type="PRINTS" id="PR00125">
    <property type="entry name" value="ATPASEDELTA"/>
</dbReference>
<dbReference type="SUPFAM" id="SSF47928">
    <property type="entry name" value="N-terminal domain of the delta subunit of the F1F0-ATP synthase"/>
    <property type="match status" value="1"/>
</dbReference>
<gene>
    <name evidence="1" type="primary">atpH</name>
    <name type="ordered locus">LSEI_1163</name>
</gene>
<comment type="function">
    <text evidence="1">F(1)F(0) ATP synthase produces ATP from ADP in the presence of a proton or sodium gradient. F-type ATPases consist of two structural domains, F(1) containing the extramembraneous catalytic core and F(0) containing the membrane proton channel, linked together by a central stalk and a peripheral stalk. During catalysis, ATP synthesis in the catalytic domain of F(1) is coupled via a rotary mechanism of the central stalk subunits to proton translocation.</text>
</comment>
<comment type="function">
    <text evidence="1">This protein is part of the stalk that links CF(0) to CF(1). It either transmits conformational changes from CF(0) to CF(1) or is implicated in proton conduction.</text>
</comment>
<comment type="subunit">
    <text evidence="1">F-type ATPases have 2 components, F(1) - the catalytic core - and F(0) - the membrane proton channel. F(1) has five subunits: alpha(3), beta(3), gamma(1), delta(1), epsilon(1). F(0) has three main subunits: a(1), b(2) and c(10-14). The alpha and beta chains form an alternating ring which encloses part of the gamma chain. F(1) is attached to F(0) by a central stalk formed by the gamma and epsilon chains, while a peripheral stalk is formed by the delta and b chains.</text>
</comment>
<comment type="subcellular location">
    <subcellularLocation>
        <location evidence="1">Cell membrane</location>
        <topology evidence="1">Peripheral membrane protein</topology>
    </subcellularLocation>
</comment>
<comment type="similarity">
    <text evidence="1">Belongs to the ATPase delta chain family.</text>
</comment>
<sequence length="181" mass="19361">MAVTNQMVAPRYAKALLEAAQDQNQVETVHEELQALQSVFNDNPTILTIFDNARITAADKDALMTTLTKDASPLVANLLKLTQQYGRFGALPAIISAFNQAYDEEAGIIAATVTTAVALSADQADALRSTIAARFGMKSTQLDQVVDPSVIGGVRIQARGSVIDGTVKHRFDKMKAALLAD</sequence>